<organism>
    <name type="scientific">Burkholderia orbicola (strain MC0-3)</name>
    <dbReference type="NCBI Taxonomy" id="406425"/>
    <lineage>
        <taxon>Bacteria</taxon>
        <taxon>Pseudomonadati</taxon>
        <taxon>Pseudomonadota</taxon>
        <taxon>Betaproteobacteria</taxon>
        <taxon>Burkholderiales</taxon>
        <taxon>Burkholderiaceae</taxon>
        <taxon>Burkholderia</taxon>
        <taxon>Burkholderia cepacia complex</taxon>
        <taxon>Burkholderia orbicola</taxon>
    </lineage>
</organism>
<dbReference type="EC" id="3.4.11.1" evidence="1"/>
<dbReference type="EC" id="3.4.11.10" evidence="1"/>
<dbReference type="EMBL" id="CP000958">
    <property type="protein sequence ID" value="ACA91632.1"/>
    <property type="molecule type" value="Genomic_DNA"/>
</dbReference>
<dbReference type="RefSeq" id="WP_012329029.1">
    <property type="nucleotide sequence ID" value="NC_010508.1"/>
</dbReference>
<dbReference type="SMR" id="B1JWV2"/>
<dbReference type="MEROPS" id="M17.003"/>
<dbReference type="GeneID" id="83049261"/>
<dbReference type="KEGG" id="bcm:Bcenmc03_2471"/>
<dbReference type="HOGENOM" id="CLU_013734_2_2_4"/>
<dbReference type="Proteomes" id="UP000002169">
    <property type="component" value="Chromosome 1"/>
</dbReference>
<dbReference type="GO" id="GO:0005737">
    <property type="term" value="C:cytoplasm"/>
    <property type="evidence" value="ECO:0007669"/>
    <property type="project" value="UniProtKB-SubCell"/>
</dbReference>
<dbReference type="GO" id="GO:0030145">
    <property type="term" value="F:manganese ion binding"/>
    <property type="evidence" value="ECO:0007669"/>
    <property type="project" value="UniProtKB-UniRule"/>
</dbReference>
<dbReference type="GO" id="GO:0070006">
    <property type="term" value="F:metalloaminopeptidase activity"/>
    <property type="evidence" value="ECO:0007669"/>
    <property type="project" value="InterPro"/>
</dbReference>
<dbReference type="GO" id="GO:0006508">
    <property type="term" value="P:proteolysis"/>
    <property type="evidence" value="ECO:0007669"/>
    <property type="project" value="UniProtKB-KW"/>
</dbReference>
<dbReference type="CDD" id="cd00433">
    <property type="entry name" value="Peptidase_M17"/>
    <property type="match status" value="1"/>
</dbReference>
<dbReference type="FunFam" id="3.40.630.10:FF:000004">
    <property type="entry name" value="Probable cytosol aminopeptidase"/>
    <property type="match status" value="1"/>
</dbReference>
<dbReference type="Gene3D" id="3.40.220.10">
    <property type="entry name" value="Leucine Aminopeptidase, subunit E, domain 1"/>
    <property type="match status" value="1"/>
</dbReference>
<dbReference type="Gene3D" id="3.40.630.10">
    <property type="entry name" value="Zn peptidases"/>
    <property type="match status" value="1"/>
</dbReference>
<dbReference type="HAMAP" id="MF_00181">
    <property type="entry name" value="Cytosol_peptidase_M17"/>
    <property type="match status" value="1"/>
</dbReference>
<dbReference type="InterPro" id="IPR011356">
    <property type="entry name" value="Leucine_aapep/pepB"/>
</dbReference>
<dbReference type="InterPro" id="IPR043472">
    <property type="entry name" value="Macro_dom-like"/>
</dbReference>
<dbReference type="InterPro" id="IPR000819">
    <property type="entry name" value="Peptidase_M17_C"/>
</dbReference>
<dbReference type="InterPro" id="IPR023042">
    <property type="entry name" value="Peptidase_M17_leu_NH2_pept"/>
</dbReference>
<dbReference type="InterPro" id="IPR008283">
    <property type="entry name" value="Peptidase_M17_N"/>
</dbReference>
<dbReference type="NCBIfam" id="NF002073">
    <property type="entry name" value="PRK00913.1-2"/>
    <property type="match status" value="1"/>
</dbReference>
<dbReference type="NCBIfam" id="NF002074">
    <property type="entry name" value="PRK00913.1-4"/>
    <property type="match status" value="1"/>
</dbReference>
<dbReference type="NCBIfam" id="NF002077">
    <property type="entry name" value="PRK00913.2-4"/>
    <property type="match status" value="1"/>
</dbReference>
<dbReference type="PANTHER" id="PTHR11963:SF23">
    <property type="entry name" value="CYTOSOL AMINOPEPTIDASE"/>
    <property type="match status" value="1"/>
</dbReference>
<dbReference type="PANTHER" id="PTHR11963">
    <property type="entry name" value="LEUCINE AMINOPEPTIDASE-RELATED"/>
    <property type="match status" value="1"/>
</dbReference>
<dbReference type="Pfam" id="PF00883">
    <property type="entry name" value="Peptidase_M17"/>
    <property type="match status" value="1"/>
</dbReference>
<dbReference type="Pfam" id="PF02789">
    <property type="entry name" value="Peptidase_M17_N"/>
    <property type="match status" value="1"/>
</dbReference>
<dbReference type="PRINTS" id="PR00481">
    <property type="entry name" value="LAMNOPPTDASE"/>
</dbReference>
<dbReference type="SUPFAM" id="SSF52949">
    <property type="entry name" value="Macro domain-like"/>
    <property type="match status" value="1"/>
</dbReference>
<dbReference type="SUPFAM" id="SSF53187">
    <property type="entry name" value="Zn-dependent exopeptidases"/>
    <property type="match status" value="1"/>
</dbReference>
<dbReference type="PROSITE" id="PS00631">
    <property type="entry name" value="CYTOSOL_AP"/>
    <property type="match status" value="1"/>
</dbReference>
<feature type="chain" id="PRO_1000098307" description="Probable cytosol aminopeptidase">
    <location>
        <begin position="1"/>
        <end position="503"/>
    </location>
</feature>
<feature type="active site" evidence="1">
    <location>
        <position position="286"/>
    </location>
</feature>
<feature type="active site" evidence="1">
    <location>
        <position position="360"/>
    </location>
</feature>
<feature type="binding site" evidence="1">
    <location>
        <position position="274"/>
    </location>
    <ligand>
        <name>Mn(2+)</name>
        <dbReference type="ChEBI" id="CHEBI:29035"/>
        <label>2</label>
    </ligand>
</feature>
<feature type="binding site" evidence="1">
    <location>
        <position position="279"/>
    </location>
    <ligand>
        <name>Mn(2+)</name>
        <dbReference type="ChEBI" id="CHEBI:29035"/>
        <label>1</label>
    </ligand>
</feature>
<feature type="binding site" evidence="1">
    <location>
        <position position="279"/>
    </location>
    <ligand>
        <name>Mn(2+)</name>
        <dbReference type="ChEBI" id="CHEBI:29035"/>
        <label>2</label>
    </ligand>
</feature>
<feature type="binding site" evidence="1">
    <location>
        <position position="297"/>
    </location>
    <ligand>
        <name>Mn(2+)</name>
        <dbReference type="ChEBI" id="CHEBI:29035"/>
        <label>2</label>
    </ligand>
</feature>
<feature type="binding site" evidence="1">
    <location>
        <position position="356"/>
    </location>
    <ligand>
        <name>Mn(2+)</name>
        <dbReference type="ChEBI" id="CHEBI:29035"/>
        <label>1</label>
    </ligand>
</feature>
<feature type="binding site" evidence="1">
    <location>
        <position position="358"/>
    </location>
    <ligand>
        <name>Mn(2+)</name>
        <dbReference type="ChEBI" id="CHEBI:29035"/>
        <label>1</label>
    </ligand>
</feature>
<feature type="binding site" evidence="1">
    <location>
        <position position="358"/>
    </location>
    <ligand>
        <name>Mn(2+)</name>
        <dbReference type="ChEBI" id="CHEBI:29035"/>
        <label>2</label>
    </ligand>
</feature>
<evidence type="ECO:0000255" key="1">
    <source>
        <dbReference type="HAMAP-Rule" id="MF_00181"/>
    </source>
</evidence>
<comment type="function">
    <text evidence="1">Presumably involved in the processing and regular turnover of intracellular proteins. Catalyzes the removal of unsubstituted N-terminal amino acids from various peptides.</text>
</comment>
<comment type="catalytic activity">
    <reaction evidence="1">
        <text>Release of an N-terminal amino acid, Xaa-|-Yaa-, in which Xaa is preferably Leu, but may be other amino acids including Pro although not Arg or Lys, and Yaa may be Pro. Amino acid amides and methyl esters are also readily hydrolyzed, but rates on arylamides are exceedingly low.</text>
        <dbReference type="EC" id="3.4.11.1"/>
    </reaction>
</comment>
<comment type="catalytic activity">
    <reaction evidence="1">
        <text>Release of an N-terminal amino acid, preferentially leucine, but not glutamic or aspartic acids.</text>
        <dbReference type="EC" id="3.4.11.10"/>
    </reaction>
</comment>
<comment type="cofactor">
    <cofactor evidence="1">
        <name>Mn(2+)</name>
        <dbReference type="ChEBI" id="CHEBI:29035"/>
    </cofactor>
    <text evidence="1">Binds 2 manganese ions per subunit.</text>
</comment>
<comment type="subcellular location">
    <subcellularLocation>
        <location evidence="1">Cytoplasm</location>
    </subcellularLocation>
</comment>
<comment type="similarity">
    <text evidence="1">Belongs to the peptidase M17 family.</text>
</comment>
<proteinExistence type="inferred from homology"/>
<reference key="1">
    <citation type="submission" date="2008-02" db="EMBL/GenBank/DDBJ databases">
        <title>Complete sequence of chromosome 1 of Burkholderia cenocepacia MC0-3.</title>
        <authorList>
            <person name="Copeland A."/>
            <person name="Lucas S."/>
            <person name="Lapidus A."/>
            <person name="Barry K."/>
            <person name="Bruce D."/>
            <person name="Goodwin L."/>
            <person name="Glavina del Rio T."/>
            <person name="Dalin E."/>
            <person name="Tice H."/>
            <person name="Pitluck S."/>
            <person name="Chain P."/>
            <person name="Malfatti S."/>
            <person name="Shin M."/>
            <person name="Vergez L."/>
            <person name="Schmutz J."/>
            <person name="Larimer F."/>
            <person name="Land M."/>
            <person name="Hauser L."/>
            <person name="Kyrpides N."/>
            <person name="Mikhailova N."/>
            <person name="Tiedje J."/>
            <person name="Richardson P."/>
        </authorList>
    </citation>
    <scope>NUCLEOTIDE SEQUENCE [LARGE SCALE GENOMIC DNA]</scope>
    <source>
        <strain>MC0-3</strain>
    </source>
</reference>
<keyword id="KW-0031">Aminopeptidase</keyword>
<keyword id="KW-0963">Cytoplasm</keyword>
<keyword id="KW-0378">Hydrolase</keyword>
<keyword id="KW-0464">Manganese</keyword>
<keyword id="KW-0479">Metal-binding</keyword>
<keyword id="KW-0645">Protease</keyword>
<gene>
    <name evidence="1" type="primary">pepA</name>
    <name type="ordered locus">Bcenmc03_2471</name>
</gene>
<name>AMPA_BURO0</name>
<accession>B1JWV2</accession>
<sequence length="503" mass="52920">MDFSIKGCDWSKGEAKGFLTGKSDCIVLGIFEAQTLSGAALDIDTATKGLISRVVKAGDMDGKRGKTLFLPEVSGIGASRVLLVGLGKQDAFNQKAYNDAATAAWRALLATKVVQVTFSLAQLPVDERSSDWGVRAAILALRNETYRFTQMKSKPEPASHTLKRVVFSVDPADEKAAKVAIKQAVALANGMDLTRDLGNLPGNVCTPTYLGNTAKKIAKDWGLKAEVLGLKQIQALKMGSFLSVARASVEPPQFIVLHYQGAAAKAAPVVLVGKGITFDTGGISLKPGEGMDEMKYDMCGAGSVLGTIRAVAEMGLKINVVAIVPTCENMPGGNATKPGDIVTSMKGLTIEVLNTDAEGRLILCDALTYAERFKPAAVIDVATLTGACVIALGGHNSGLFSTNDALAGELLDASREANDPAWRMPLDDEYQDQLKSNFADLANIGGRPAGAVTAACFLSRFTESYPWAHLDIAGTAWKGGAAKGATGRPVPLLAQFLIDRAGQ</sequence>
<protein>
    <recommendedName>
        <fullName evidence="1">Probable cytosol aminopeptidase</fullName>
        <ecNumber evidence="1">3.4.11.1</ecNumber>
    </recommendedName>
    <alternativeName>
        <fullName evidence="1">Leucine aminopeptidase</fullName>
        <shortName evidence="1">LAP</shortName>
        <ecNumber evidence="1">3.4.11.10</ecNumber>
    </alternativeName>
    <alternativeName>
        <fullName evidence="1">Leucyl aminopeptidase</fullName>
    </alternativeName>
</protein>